<dbReference type="EMBL" id="CP000626">
    <property type="protein sequence ID" value="ABQ18587.1"/>
    <property type="molecule type" value="Genomic_DNA"/>
</dbReference>
<dbReference type="EMBL" id="CP001236">
    <property type="protein sequence ID" value="ACP11406.1"/>
    <property type="molecule type" value="Genomic_DNA"/>
</dbReference>
<dbReference type="RefSeq" id="WP_001089529.1">
    <property type="nucleotide sequence ID" value="NZ_JAACZH010000025.1"/>
</dbReference>
<dbReference type="SMR" id="A5EZT0"/>
<dbReference type="KEGG" id="vco:VC0395_0679"/>
<dbReference type="KEGG" id="vcr:VC395_A0572"/>
<dbReference type="PATRIC" id="fig|345073.21.peg.3313"/>
<dbReference type="eggNOG" id="COG2926">
    <property type="taxonomic scope" value="Bacteria"/>
</dbReference>
<dbReference type="HOGENOM" id="CLU_153146_0_0_6"/>
<dbReference type="OrthoDB" id="90485at2"/>
<dbReference type="Proteomes" id="UP000000249">
    <property type="component" value="Chromosome 1"/>
</dbReference>
<dbReference type="GO" id="GO:0005829">
    <property type="term" value="C:cytosol"/>
    <property type="evidence" value="ECO:0007669"/>
    <property type="project" value="TreeGrafter"/>
</dbReference>
<dbReference type="HAMAP" id="MF_00683">
    <property type="entry name" value="Pole_loc_TmaR"/>
    <property type="match status" value="1"/>
</dbReference>
<dbReference type="InterPro" id="IPR007458">
    <property type="entry name" value="DUF496"/>
</dbReference>
<dbReference type="NCBIfam" id="NF003844">
    <property type="entry name" value="PRK05423.1"/>
    <property type="match status" value="1"/>
</dbReference>
<dbReference type="PANTHER" id="PTHR39591">
    <property type="entry name" value="UPF0265 PROTEIN YEEX"/>
    <property type="match status" value="1"/>
</dbReference>
<dbReference type="PANTHER" id="PTHR39591:SF1">
    <property type="entry name" value="UPF0265 PROTEIN YEEX"/>
    <property type="match status" value="1"/>
</dbReference>
<dbReference type="Pfam" id="PF04363">
    <property type="entry name" value="DUF496"/>
    <property type="match status" value="1"/>
</dbReference>
<dbReference type="PIRSF" id="PIRSF028773">
    <property type="entry name" value="UCP028773"/>
    <property type="match status" value="1"/>
</dbReference>
<accession>A5EZT0</accession>
<accession>C3M5J3</accession>
<sequence length="106" mass="12662">MNSVFEIVSLARRKNKLQRELDDNEKKVRDNRKRVELLVNLLDYIKPNMSHEEILGIIKNMKSDYEDRVDDHIIKSAEISKERRDISRRIKDLTEHDKQMTQGKKA</sequence>
<protein>
    <recommendedName>
        <fullName evidence="1">Pole-localizer protein TmaR</fullName>
    </recommendedName>
</protein>
<keyword id="KW-0175">Coiled coil</keyword>
<keyword id="KW-0963">Cytoplasm</keyword>
<feature type="chain" id="PRO_1000072733" description="Pole-localizer protein TmaR">
    <location>
        <begin position="1"/>
        <end position="106"/>
    </location>
</feature>
<feature type="coiled-coil region" evidence="1">
    <location>
        <begin position="7"/>
        <end position="34"/>
    </location>
</feature>
<name>TMAR_VIBC3</name>
<gene>
    <name evidence="1" type="primary">tmaR</name>
    <name type="ordered locus">VC0395_0679</name>
    <name type="ordered locus">VC395_A0572</name>
</gene>
<evidence type="ECO:0000255" key="1">
    <source>
        <dbReference type="HAMAP-Rule" id="MF_00683"/>
    </source>
</evidence>
<proteinExistence type="inferred from homology"/>
<reference key="1">
    <citation type="submission" date="2007-03" db="EMBL/GenBank/DDBJ databases">
        <authorList>
            <person name="Heidelberg J."/>
        </authorList>
    </citation>
    <scope>NUCLEOTIDE SEQUENCE [LARGE SCALE GENOMIC DNA]</scope>
    <source>
        <strain>ATCC 39541 / Classical Ogawa 395 / O395</strain>
    </source>
</reference>
<reference key="2">
    <citation type="journal article" date="2008" name="PLoS ONE">
        <title>A recalibrated molecular clock and independent origins for the cholera pandemic clones.</title>
        <authorList>
            <person name="Feng L."/>
            <person name="Reeves P.R."/>
            <person name="Lan R."/>
            <person name="Ren Y."/>
            <person name="Gao C."/>
            <person name="Zhou Z."/>
            <person name="Ren Y."/>
            <person name="Cheng J."/>
            <person name="Wang W."/>
            <person name="Wang J."/>
            <person name="Qian W."/>
            <person name="Li D."/>
            <person name="Wang L."/>
        </authorList>
    </citation>
    <scope>NUCLEOTIDE SEQUENCE [LARGE SCALE GENOMIC DNA]</scope>
    <source>
        <strain>ATCC 39541 / Classical Ogawa 395 / O395</strain>
    </source>
</reference>
<comment type="function">
    <text evidence="1">Pole-localizer protein involved in the regulation of several cellular processes.</text>
</comment>
<comment type="subcellular location">
    <subcellularLocation>
        <location evidence="1">Cytoplasm</location>
    </subcellularLocation>
</comment>
<comment type="similarity">
    <text evidence="1">Belongs to the pole-localizer TmaR family.</text>
</comment>
<organism>
    <name type="scientific">Vibrio cholerae serotype O1 (strain ATCC 39541 / Classical Ogawa 395 / O395)</name>
    <dbReference type="NCBI Taxonomy" id="345073"/>
    <lineage>
        <taxon>Bacteria</taxon>
        <taxon>Pseudomonadati</taxon>
        <taxon>Pseudomonadota</taxon>
        <taxon>Gammaproteobacteria</taxon>
        <taxon>Vibrionales</taxon>
        <taxon>Vibrionaceae</taxon>
        <taxon>Vibrio</taxon>
    </lineage>
</organism>